<organism>
    <name type="scientific">Ehrlichia ruminantium (strain Gardel)</name>
    <dbReference type="NCBI Taxonomy" id="302409"/>
    <lineage>
        <taxon>Bacteria</taxon>
        <taxon>Pseudomonadati</taxon>
        <taxon>Pseudomonadota</taxon>
        <taxon>Alphaproteobacteria</taxon>
        <taxon>Rickettsiales</taxon>
        <taxon>Anaplasmataceae</taxon>
        <taxon>Ehrlichia</taxon>
    </lineage>
</organism>
<gene>
    <name evidence="1" type="primary">rpsF</name>
    <name type="ordered locus">ERGA_CDS_07140</name>
</gene>
<dbReference type="EMBL" id="CR925677">
    <property type="protein sequence ID" value="CAI28166.1"/>
    <property type="molecule type" value="Genomic_DNA"/>
</dbReference>
<dbReference type="RefSeq" id="WP_011155366.1">
    <property type="nucleotide sequence ID" value="NC_006831.1"/>
</dbReference>
<dbReference type="SMR" id="Q5FG27"/>
<dbReference type="GeneID" id="33058049"/>
<dbReference type="KEGG" id="erg:ERGA_CDS_07140"/>
<dbReference type="HOGENOM" id="CLU_113441_5_3_5"/>
<dbReference type="OrthoDB" id="9812702at2"/>
<dbReference type="Proteomes" id="UP000000533">
    <property type="component" value="Chromosome"/>
</dbReference>
<dbReference type="GO" id="GO:0005737">
    <property type="term" value="C:cytoplasm"/>
    <property type="evidence" value="ECO:0007669"/>
    <property type="project" value="UniProtKB-ARBA"/>
</dbReference>
<dbReference type="GO" id="GO:1990904">
    <property type="term" value="C:ribonucleoprotein complex"/>
    <property type="evidence" value="ECO:0007669"/>
    <property type="project" value="UniProtKB-KW"/>
</dbReference>
<dbReference type="GO" id="GO:0005840">
    <property type="term" value="C:ribosome"/>
    <property type="evidence" value="ECO:0007669"/>
    <property type="project" value="UniProtKB-KW"/>
</dbReference>
<dbReference type="GO" id="GO:0070181">
    <property type="term" value="F:small ribosomal subunit rRNA binding"/>
    <property type="evidence" value="ECO:0007669"/>
    <property type="project" value="TreeGrafter"/>
</dbReference>
<dbReference type="GO" id="GO:0003735">
    <property type="term" value="F:structural constituent of ribosome"/>
    <property type="evidence" value="ECO:0007669"/>
    <property type="project" value="InterPro"/>
</dbReference>
<dbReference type="GO" id="GO:0006412">
    <property type="term" value="P:translation"/>
    <property type="evidence" value="ECO:0007669"/>
    <property type="project" value="UniProtKB-UniRule"/>
</dbReference>
<dbReference type="CDD" id="cd00473">
    <property type="entry name" value="bS6"/>
    <property type="match status" value="1"/>
</dbReference>
<dbReference type="Gene3D" id="3.30.70.60">
    <property type="match status" value="1"/>
</dbReference>
<dbReference type="HAMAP" id="MF_00360">
    <property type="entry name" value="Ribosomal_bS6"/>
    <property type="match status" value="1"/>
</dbReference>
<dbReference type="InterPro" id="IPR000529">
    <property type="entry name" value="Ribosomal_bS6"/>
</dbReference>
<dbReference type="InterPro" id="IPR035980">
    <property type="entry name" value="Ribosomal_bS6_sf"/>
</dbReference>
<dbReference type="InterPro" id="IPR020814">
    <property type="entry name" value="Ribosomal_S6_plastid/chlpt"/>
</dbReference>
<dbReference type="InterPro" id="IPR014717">
    <property type="entry name" value="Transl_elong_EF1B/ribsomal_bS6"/>
</dbReference>
<dbReference type="NCBIfam" id="TIGR00166">
    <property type="entry name" value="S6"/>
    <property type="match status" value="1"/>
</dbReference>
<dbReference type="PANTHER" id="PTHR21011">
    <property type="entry name" value="MITOCHONDRIAL 28S RIBOSOMAL PROTEIN S6"/>
    <property type="match status" value="1"/>
</dbReference>
<dbReference type="PANTHER" id="PTHR21011:SF1">
    <property type="entry name" value="SMALL RIBOSOMAL SUBUNIT PROTEIN BS6M"/>
    <property type="match status" value="1"/>
</dbReference>
<dbReference type="Pfam" id="PF01250">
    <property type="entry name" value="Ribosomal_S6"/>
    <property type="match status" value="1"/>
</dbReference>
<dbReference type="SUPFAM" id="SSF54995">
    <property type="entry name" value="Ribosomal protein S6"/>
    <property type="match status" value="1"/>
</dbReference>
<name>RS6_EHRRG</name>
<feature type="chain" id="PRO_0000229541" description="Small ribosomal subunit protein bS6">
    <location>
        <begin position="1"/>
        <end position="109"/>
    </location>
</feature>
<sequence length="109" mass="12635">MPLYEFTFIAQQGLTQYELEGLVKGLSSLLTKNGAELLKYEYWGLLDFAYAIDKMNKGHYCMMYIRSSSTSMDEFKRKVRLNEDVLRFLCLKRDKLPEGDSLMVQASQA</sequence>
<accession>Q5FG27</accession>
<proteinExistence type="inferred from homology"/>
<evidence type="ECO:0000255" key="1">
    <source>
        <dbReference type="HAMAP-Rule" id="MF_00360"/>
    </source>
</evidence>
<evidence type="ECO:0000305" key="2"/>
<reference key="1">
    <citation type="journal article" date="2006" name="J. Bacteriol.">
        <title>Comparative genomic analysis of three strains of Ehrlichia ruminantium reveals an active process of genome size plasticity.</title>
        <authorList>
            <person name="Frutos R."/>
            <person name="Viari A."/>
            <person name="Ferraz C."/>
            <person name="Morgat A."/>
            <person name="Eychenie S."/>
            <person name="Kandassamy Y."/>
            <person name="Chantal I."/>
            <person name="Bensaid A."/>
            <person name="Coissac E."/>
            <person name="Vachiery N."/>
            <person name="Demaille J."/>
            <person name="Martinez D."/>
        </authorList>
    </citation>
    <scope>NUCLEOTIDE SEQUENCE [LARGE SCALE GENOMIC DNA]</scope>
    <source>
        <strain>Gardel</strain>
    </source>
</reference>
<protein>
    <recommendedName>
        <fullName evidence="1">Small ribosomal subunit protein bS6</fullName>
    </recommendedName>
    <alternativeName>
        <fullName evidence="2">30S ribosomal protein S6</fullName>
    </alternativeName>
</protein>
<keyword id="KW-0687">Ribonucleoprotein</keyword>
<keyword id="KW-0689">Ribosomal protein</keyword>
<keyword id="KW-0694">RNA-binding</keyword>
<keyword id="KW-0699">rRNA-binding</keyword>
<comment type="function">
    <text evidence="1">Binds together with bS18 to 16S ribosomal RNA.</text>
</comment>
<comment type="similarity">
    <text evidence="1">Belongs to the bacterial ribosomal protein bS6 family.</text>
</comment>